<comment type="similarity">
    <text evidence="4">Belongs to the LRRC42 family.</text>
</comment>
<keyword id="KW-0433">Leucine-rich repeat</keyword>
<keyword id="KW-0597">Phosphoprotein</keyword>
<keyword id="KW-1185">Reference proteome</keyword>
<keyword id="KW-0677">Repeat</keyword>
<accession>Q2HJ90</accession>
<evidence type="ECO:0000250" key="1">
    <source>
        <dbReference type="UniProtKB" id="Q8R2U7"/>
    </source>
</evidence>
<evidence type="ECO:0000250" key="2">
    <source>
        <dbReference type="UniProtKB" id="Q9Y546"/>
    </source>
</evidence>
<evidence type="ECO:0000256" key="3">
    <source>
        <dbReference type="SAM" id="MobiDB-lite"/>
    </source>
</evidence>
<evidence type="ECO:0000305" key="4"/>
<reference key="1">
    <citation type="submission" date="2006-02" db="EMBL/GenBank/DDBJ databases">
        <authorList>
            <consortium name="NIH - Mammalian Gene Collection (MGC) project"/>
        </authorList>
    </citation>
    <scope>NUCLEOTIDE SEQUENCE [LARGE SCALE MRNA]</scope>
    <source>
        <strain>Hereford</strain>
        <tissue>Uterus</tissue>
    </source>
</reference>
<name>LRC42_BOVIN</name>
<dbReference type="EMBL" id="BC113249">
    <property type="protein sequence ID" value="AAI13250.1"/>
    <property type="molecule type" value="mRNA"/>
</dbReference>
<dbReference type="RefSeq" id="NP_001039851.1">
    <property type="nucleotide sequence ID" value="NM_001046386.1"/>
</dbReference>
<dbReference type="FunCoup" id="Q2HJ90">
    <property type="interactions" value="2975"/>
</dbReference>
<dbReference type="STRING" id="9913.ENSBTAP00000040839"/>
<dbReference type="PaxDb" id="9913-ENSBTAP00000040839"/>
<dbReference type="Ensembl" id="ENSBTAT00000043252.3">
    <property type="protein sequence ID" value="ENSBTAP00000040839.1"/>
    <property type="gene ID" value="ENSBTAG00000019198.6"/>
</dbReference>
<dbReference type="GeneID" id="534728"/>
<dbReference type="KEGG" id="bta:534728"/>
<dbReference type="CTD" id="115353"/>
<dbReference type="VEuPathDB" id="HostDB:ENSBTAG00000019198"/>
<dbReference type="VGNC" id="VGNC:31016">
    <property type="gene designation" value="LRRC42"/>
</dbReference>
<dbReference type="eggNOG" id="ENOG502QQJZ">
    <property type="taxonomic scope" value="Eukaryota"/>
</dbReference>
<dbReference type="GeneTree" id="ENSGT00390000002727"/>
<dbReference type="HOGENOM" id="CLU_053705_0_0_1"/>
<dbReference type="InParanoid" id="Q2HJ90"/>
<dbReference type="OMA" id="FYGKTHR"/>
<dbReference type="OrthoDB" id="120976at2759"/>
<dbReference type="TreeFam" id="TF331102"/>
<dbReference type="Proteomes" id="UP000009136">
    <property type="component" value="Chromosome 3"/>
</dbReference>
<dbReference type="Bgee" id="ENSBTAG00000019198">
    <property type="expression patterns" value="Expressed in oocyte and 105 other cell types or tissues"/>
</dbReference>
<dbReference type="Gene3D" id="3.80.10.10">
    <property type="entry name" value="Ribonuclease Inhibitor"/>
    <property type="match status" value="1"/>
</dbReference>
<dbReference type="InterPro" id="IPR001611">
    <property type="entry name" value="Leu-rich_rpt"/>
</dbReference>
<dbReference type="InterPro" id="IPR032675">
    <property type="entry name" value="LRR_dom_sf"/>
</dbReference>
<dbReference type="InterPro" id="IPR039631">
    <property type="entry name" value="LRRC42"/>
</dbReference>
<dbReference type="PANTHER" id="PTHR31994">
    <property type="entry name" value="LEUCINE-RICH REPEAT-CONTAINING PROTEIN 42"/>
    <property type="match status" value="1"/>
</dbReference>
<dbReference type="PANTHER" id="PTHR31994:SF3">
    <property type="entry name" value="LEUCINE-RICH REPEAT-CONTAINING PROTEIN 42"/>
    <property type="match status" value="1"/>
</dbReference>
<dbReference type="Pfam" id="PF13516">
    <property type="entry name" value="LRR_6"/>
    <property type="match status" value="3"/>
</dbReference>
<dbReference type="SUPFAM" id="SSF52047">
    <property type="entry name" value="RNI-like"/>
    <property type="match status" value="1"/>
</dbReference>
<sequence length="428" mass="48585">MSYYLNSENHLDSGPIYVRENGQLHMVNLALDDVRSSLQKPRPFRLFPKGFSVELCMNREDDTAQKEKTDHFIFTYTREGNLRYSAKSLFSLVLGFISDNVDHIDSLIGFPEQIAEKLFSAAEARQKFTEPGAGLRALQKFTEAYGSLVLCSLCLRNRYLVISEKLEEIKSFRELTCLDLSCCKLGDEHELLEHLTNEALSSVTQLRLKDNCLSDAGVRKMTAPVRVMKRGLENLSLLDLSCNPEITDAGIGYLFSFRKLNCLDISGTGLKDIKAVKHKLQTHIGLVHSKVPLKEFDHSNCKTEGWADQIVLQWERVTLEAMKPQETLESRTAAQHFYGKRARTEAPGKYPLTEAHMNSSEKLQFYKEKAADCHGPLLKHEALSSQESKKSKKRAFEEPEKEQGSSSQTSKQKYVCLAVEDWDLLNSY</sequence>
<proteinExistence type="evidence at transcript level"/>
<protein>
    <recommendedName>
        <fullName>Leucine-rich repeat-containing protein 42</fullName>
    </recommendedName>
</protein>
<feature type="chain" id="PRO_0000360040" description="Leucine-rich repeat-containing protein 42">
    <location>
        <begin position="1"/>
        <end position="428"/>
    </location>
</feature>
<feature type="repeat" description="LRR 1">
    <location>
        <begin position="149"/>
        <end position="170"/>
    </location>
</feature>
<feature type="repeat" description="LRR 2">
    <location>
        <begin position="174"/>
        <end position="195"/>
    </location>
</feature>
<feature type="repeat" description="LRR 3">
    <location>
        <begin position="202"/>
        <end position="222"/>
    </location>
</feature>
<feature type="repeat" description="LRR 4">
    <location>
        <begin position="234"/>
        <end position="255"/>
    </location>
</feature>
<feature type="repeat" description="LRR 5">
    <location>
        <begin position="259"/>
        <end position="280"/>
    </location>
</feature>
<feature type="region of interest" description="Disordered" evidence="3">
    <location>
        <begin position="379"/>
        <end position="412"/>
    </location>
</feature>
<feature type="compositionally biased region" description="Basic and acidic residues" evidence="3">
    <location>
        <begin position="394"/>
        <end position="403"/>
    </location>
</feature>
<feature type="modified residue" description="Phosphoserine" evidence="1">
    <location>
        <position position="406"/>
    </location>
</feature>
<feature type="modified residue" description="Phosphoserine" evidence="2">
    <location>
        <position position="407"/>
    </location>
</feature>
<organism>
    <name type="scientific">Bos taurus</name>
    <name type="common">Bovine</name>
    <dbReference type="NCBI Taxonomy" id="9913"/>
    <lineage>
        <taxon>Eukaryota</taxon>
        <taxon>Metazoa</taxon>
        <taxon>Chordata</taxon>
        <taxon>Craniata</taxon>
        <taxon>Vertebrata</taxon>
        <taxon>Euteleostomi</taxon>
        <taxon>Mammalia</taxon>
        <taxon>Eutheria</taxon>
        <taxon>Laurasiatheria</taxon>
        <taxon>Artiodactyla</taxon>
        <taxon>Ruminantia</taxon>
        <taxon>Pecora</taxon>
        <taxon>Bovidae</taxon>
        <taxon>Bovinae</taxon>
        <taxon>Bos</taxon>
    </lineage>
</organism>
<gene>
    <name type="primary">LRRC42</name>
</gene>